<feature type="chain" id="PRO_1000019577" description="Exodeoxyribonuclease 7 small subunit">
    <location>
        <begin position="1"/>
        <end position="71"/>
    </location>
</feature>
<reference key="1">
    <citation type="journal article" date="2007" name="Genome Res.">
        <title>Genome sequence of a proteolytic (Group I) Clostridium botulinum strain Hall A and comparative analysis of the clostridial genomes.</title>
        <authorList>
            <person name="Sebaihia M."/>
            <person name="Peck M.W."/>
            <person name="Minton N.P."/>
            <person name="Thomson N.R."/>
            <person name="Holden M.T.G."/>
            <person name="Mitchell W.J."/>
            <person name="Carter A.T."/>
            <person name="Bentley S.D."/>
            <person name="Mason D.R."/>
            <person name="Crossman L."/>
            <person name="Paul C.J."/>
            <person name="Ivens A."/>
            <person name="Wells-Bennik M.H.J."/>
            <person name="Davis I.J."/>
            <person name="Cerdeno-Tarraga A.M."/>
            <person name="Churcher C."/>
            <person name="Quail M.A."/>
            <person name="Chillingworth T."/>
            <person name="Feltwell T."/>
            <person name="Fraser A."/>
            <person name="Goodhead I."/>
            <person name="Hance Z."/>
            <person name="Jagels K."/>
            <person name="Larke N."/>
            <person name="Maddison M."/>
            <person name="Moule S."/>
            <person name="Mungall K."/>
            <person name="Norbertczak H."/>
            <person name="Rabbinowitsch E."/>
            <person name="Sanders M."/>
            <person name="Simmonds M."/>
            <person name="White B."/>
            <person name="Whithead S."/>
            <person name="Parkhill J."/>
        </authorList>
    </citation>
    <scope>NUCLEOTIDE SEQUENCE [LARGE SCALE GENOMIC DNA]</scope>
    <source>
        <strain>Hall / ATCC 3502 / NCTC 13319 / Type A</strain>
    </source>
</reference>
<reference key="2">
    <citation type="journal article" date="2007" name="PLoS ONE">
        <title>Analysis of the neurotoxin complex genes in Clostridium botulinum A1-A4 and B1 strains: BoNT/A3, /Ba4 and /B1 clusters are located within plasmids.</title>
        <authorList>
            <person name="Smith T.J."/>
            <person name="Hill K.K."/>
            <person name="Foley B.T."/>
            <person name="Detter J.C."/>
            <person name="Munk A.C."/>
            <person name="Bruce D.C."/>
            <person name="Doggett N.A."/>
            <person name="Smith L.A."/>
            <person name="Marks J.D."/>
            <person name="Xie G."/>
            <person name="Brettin T.S."/>
        </authorList>
    </citation>
    <scope>NUCLEOTIDE SEQUENCE [LARGE SCALE GENOMIC DNA]</scope>
    <source>
        <strain>Hall / ATCC 3502 / NCTC 13319 / Type A</strain>
    </source>
</reference>
<name>EX7S_CLOBH</name>
<proteinExistence type="inferred from homology"/>
<accession>A5I308</accession>
<accession>A7G4G8</accession>
<organism>
    <name type="scientific">Clostridium botulinum (strain Hall / ATCC 3502 / NCTC 13319 / Type A)</name>
    <dbReference type="NCBI Taxonomy" id="441771"/>
    <lineage>
        <taxon>Bacteria</taxon>
        <taxon>Bacillati</taxon>
        <taxon>Bacillota</taxon>
        <taxon>Clostridia</taxon>
        <taxon>Eubacteriales</taxon>
        <taxon>Clostridiaceae</taxon>
        <taxon>Clostridium</taxon>
    </lineage>
</organism>
<protein>
    <recommendedName>
        <fullName evidence="1">Exodeoxyribonuclease 7 small subunit</fullName>
        <ecNumber evidence="1">3.1.11.6</ecNumber>
    </recommendedName>
    <alternativeName>
        <fullName evidence="1">Exodeoxyribonuclease VII small subunit</fullName>
        <shortName evidence="1">Exonuclease VII small subunit</shortName>
    </alternativeName>
</protein>
<keyword id="KW-0963">Cytoplasm</keyword>
<keyword id="KW-0269">Exonuclease</keyword>
<keyword id="KW-0378">Hydrolase</keyword>
<keyword id="KW-0540">Nuclease</keyword>
<keyword id="KW-1185">Reference proteome</keyword>
<sequence length="71" mass="8308">MEKKKESFENMLEKLETIVDSMDNGEITLEDSMKSYEEGIKLCNKLYKVLKDAEGKIKILENNKEEDFENS</sequence>
<comment type="function">
    <text evidence="1">Bidirectionally degrades single-stranded DNA into large acid-insoluble oligonucleotides, which are then degraded further into small acid-soluble oligonucleotides.</text>
</comment>
<comment type="catalytic activity">
    <reaction evidence="1">
        <text>Exonucleolytic cleavage in either 5'- to 3'- or 3'- to 5'-direction to yield nucleoside 5'-phosphates.</text>
        <dbReference type="EC" id="3.1.11.6"/>
    </reaction>
</comment>
<comment type="subunit">
    <text evidence="1">Heterooligomer composed of large and small subunits.</text>
</comment>
<comment type="subcellular location">
    <subcellularLocation>
        <location evidence="1">Cytoplasm</location>
    </subcellularLocation>
</comment>
<comment type="similarity">
    <text evidence="1">Belongs to the XseB family.</text>
</comment>
<dbReference type="EC" id="3.1.11.6" evidence="1"/>
<dbReference type="EMBL" id="CP000727">
    <property type="protein sequence ID" value="ABS38212.1"/>
    <property type="molecule type" value="Genomic_DNA"/>
</dbReference>
<dbReference type="EMBL" id="AM412317">
    <property type="protein sequence ID" value="CAL83425.1"/>
    <property type="molecule type" value="Genomic_DNA"/>
</dbReference>
<dbReference type="RefSeq" id="WP_011986443.1">
    <property type="nucleotide sequence ID" value="NC_009698.1"/>
</dbReference>
<dbReference type="RefSeq" id="YP_001254386.1">
    <property type="nucleotide sequence ID" value="NC_009495.1"/>
</dbReference>
<dbReference type="RefSeq" id="YP_001387683.1">
    <property type="nucleotide sequence ID" value="NC_009698.1"/>
</dbReference>
<dbReference type="SMR" id="A5I308"/>
<dbReference type="GeneID" id="5186139"/>
<dbReference type="KEGG" id="cbh:CLC_1828"/>
<dbReference type="KEGG" id="cbo:CBO1884"/>
<dbReference type="PATRIC" id="fig|413999.7.peg.1856"/>
<dbReference type="HOGENOM" id="CLU_145918_3_2_9"/>
<dbReference type="PRO" id="PR:A5I308"/>
<dbReference type="Proteomes" id="UP000001986">
    <property type="component" value="Chromosome"/>
</dbReference>
<dbReference type="GO" id="GO:0005829">
    <property type="term" value="C:cytosol"/>
    <property type="evidence" value="ECO:0000318"/>
    <property type="project" value="GO_Central"/>
</dbReference>
<dbReference type="GO" id="GO:0009318">
    <property type="term" value="C:exodeoxyribonuclease VII complex"/>
    <property type="evidence" value="ECO:0007669"/>
    <property type="project" value="InterPro"/>
</dbReference>
<dbReference type="GO" id="GO:0008855">
    <property type="term" value="F:exodeoxyribonuclease VII activity"/>
    <property type="evidence" value="ECO:0000318"/>
    <property type="project" value="GO_Central"/>
</dbReference>
<dbReference type="GO" id="GO:0006308">
    <property type="term" value="P:DNA catabolic process"/>
    <property type="evidence" value="ECO:0007669"/>
    <property type="project" value="UniProtKB-UniRule"/>
</dbReference>
<dbReference type="FunFam" id="1.10.287.1040:FF:000010">
    <property type="entry name" value="Exodeoxyribonuclease 7 small subunit"/>
    <property type="match status" value="1"/>
</dbReference>
<dbReference type="Gene3D" id="1.10.287.1040">
    <property type="entry name" value="Exonuclease VII, small subunit"/>
    <property type="match status" value="1"/>
</dbReference>
<dbReference type="HAMAP" id="MF_00337">
    <property type="entry name" value="Exonuc_7_S"/>
    <property type="match status" value="1"/>
</dbReference>
<dbReference type="InterPro" id="IPR003761">
    <property type="entry name" value="Exonuc_VII_S"/>
</dbReference>
<dbReference type="InterPro" id="IPR037004">
    <property type="entry name" value="Exonuc_VII_ssu_sf"/>
</dbReference>
<dbReference type="NCBIfam" id="NF002140">
    <property type="entry name" value="PRK00977.1-4"/>
    <property type="match status" value="1"/>
</dbReference>
<dbReference type="NCBIfam" id="TIGR01280">
    <property type="entry name" value="xseB"/>
    <property type="match status" value="1"/>
</dbReference>
<dbReference type="PANTHER" id="PTHR34137">
    <property type="entry name" value="EXODEOXYRIBONUCLEASE 7 SMALL SUBUNIT"/>
    <property type="match status" value="1"/>
</dbReference>
<dbReference type="PANTHER" id="PTHR34137:SF1">
    <property type="entry name" value="EXODEOXYRIBONUCLEASE 7 SMALL SUBUNIT"/>
    <property type="match status" value="1"/>
</dbReference>
<dbReference type="Pfam" id="PF02609">
    <property type="entry name" value="Exonuc_VII_S"/>
    <property type="match status" value="1"/>
</dbReference>
<dbReference type="PIRSF" id="PIRSF006488">
    <property type="entry name" value="Exonuc_VII_S"/>
    <property type="match status" value="1"/>
</dbReference>
<dbReference type="SUPFAM" id="SSF116842">
    <property type="entry name" value="XseB-like"/>
    <property type="match status" value="1"/>
</dbReference>
<evidence type="ECO:0000255" key="1">
    <source>
        <dbReference type="HAMAP-Rule" id="MF_00337"/>
    </source>
</evidence>
<gene>
    <name evidence="1" type="primary">xseB</name>
    <name type="ordered locus">CBO1884</name>
    <name type="ordered locus">CLC_1828</name>
</gene>